<evidence type="ECO:0000250" key="1">
    <source>
        <dbReference type="UniProtKB" id="P24783"/>
    </source>
</evidence>
<evidence type="ECO:0000255" key="2">
    <source>
        <dbReference type="PROSITE-ProRule" id="PRU00541"/>
    </source>
</evidence>
<evidence type="ECO:0000255" key="3">
    <source>
        <dbReference type="PROSITE-ProRule" id="PRU00542"/>
    </source>
</evidence>
<evidence type="ECO:0000255" key="4">
    <source>
        <dbReference type="PROSITE-ProRule" id="PRU00552"/>
    </source>
</evidence>
<evidence type="ECO:0000256" key="5">
    <source>
        <dbReference type="SAM" id="MobiDB-lite"/>
    </source>
</evidence>
<evidence type="ECO:0000305" key="6"/>
<sequence length="556" mass="60625">MSSYGGGYSGGGGGYSNNYDRNGGYSNGYSGSNGYSGGGGGYGSHGSRSYGGGGYGGGYGGGDRGGDRMAGLGSGLQKPNWDLATLPKFEKSFYKEHPNVTARSMAEVEKFRRDHNITVSGRDVPKPVETFDEAGFPRYVMDEVKAQGFPAPTAIQAQGWPMALSGRDVVGIAETGSGKTLTYCLPAIVHINAQPLLAPGDGPIVLVLAPTRELAVQIQQEINKFGKSSRIRNTCIYGGVPKGPQIRDLQRGVEVCIATPGRLIDMLESGKTNLRRVTYLVLDEADRMLDMGFEPQIRKIISQIRPDRQTLMWSATWPKEVRNLAADFLTDFIQVNIGSLDLAANHRITQIVEVISESEKRDRLIKHLEKIMDSRDTQNKCLIFVGTKRVADDITRFLRQDGWPALSIHGDKQQNERDWVLDQFKTGKSPIMVATDVASRGIDVRNITHVINYDYPNNSEDYIHRIGRTGRAGAKGTAITFFTTENAKQARDLVSVLQEAKQHVDPRLLEMARYSGGGGSSRYGGYRGRGGGGYRGGHRSAAHSGANAVPVANRRW</sequence>
<proteinExistence type="inferred from homology"/>
<protein>
    <recommendedName>
        <fullName>ATP-dependent RNA helicase DBP2</fullName>
        <ecNumber>3.6.4.13</ecNumber>
    </recommendedName>
    <alternativeName>
        <fullName>DEAD box protein 2</fullName>
    </alternativeName>
</protein>
<name>DBP2_CHATD</name>
<gene>
    <name type="primary">DBP2</name>
    <name type="ORF">CTHT_0071350</name>
</gene>
<feature type="chain" id="PRO_0000435812" description="ATP-dependent RNA helicase DBP2">
    <location>
        <begin position="1"/>
        <end position="556"/>
    </location>
</feature>
<feature type="domain" description="Helicase ATP-binding" evidence="2">
    <location>
        <begin position="160"/>
        <end position="335"/>
    </location>
</feature>
<feature type="domain" description="Helicase C-terminal" evidence="3">
    <location>
        <begin position="347"/>
        <end position="512"/>
    </location>
</feature>
<feature type="region of interest" description="Disordered" evidence="5">
    <location>
        <begin position="534"/>
        <end position="556"/>
    </location>
</feature>
<feature type="short sequence motif" description="Q motif" evidence="4">
    <location>
        <begin position="129"/>
        <end position="157"/>
    </location>
</feature>
<feature type="short sequence motif" description="DEAD box" evidence="2">
    <location>
        <begin position="283"/>
        <end position="286"/>
    </location>
</feature>
<feature type="binding site" evidence="2">
    <location>
        <begin position="173"/>
        <end position="180"/>
    </location>
    <ligand>
        <name>ATP</name>
        <dbReference type="ChEBI" id="CHEBI:30616"/>
    </ligand>
</feature>
<dbReference type="EC" id="3.6.4.13"/>
<dbReference type="EMBL" id="GL988047">
    <property type="protein sequence ID" value="EGS17787.1"/>
    <property type="status" value="ALT_SEQ"/>
    <property type="molecule type" value="Genomic_DNA"/>
</dbReference>
<dbReference type="RefSeq" id="XP_006697405.1">
    <property type="nucleotide sequence ID" value="XM_006697342.1"/>
</dbReference>
<dbReference type="SMR" id="G0SFM2"/>
<dbReference type="STRING" id="759272.G0SFM2"/>
<dbReference type="GeneID" id="18261173"/>
<dbReference type="KEGG" id="cthr:CTHT_0071350"/>
<dbReference type="HOGENOM" id="CLU_003041_16_9_1"/>
<dbReference type="OrthoDB" id="196131at2759"/>
<dbReference type="Proteomes" id="UP000008066">
    <property type="component" value="Unassembled WGS sequence"/>
</dbReference>
<dbReference type="GO" id="GO:0005737">
    <property type="term" value="C:cytoplasm"/>
    <property type="evidence" value="ECO:0007669"/>
    <property type="project" value="UniProtKB-SubCell"/>
</dbReference>
<dbReference type="GO" id="GO:0005634">
    <property type="term" value="C:nucleus"/>
    <property type="evidence" value="ECO:0007669"/>
    <property type="project" value="UniProtKB-SubCell"/>
</dbReference>
<dbReference type="GO" id="GO:0005524">
    <property type="term" value="F:ATP binding"/>
    <property type="evidence" value="ECO:0007669"/>
    <property type="project" value="UniProtKB-KW"/>
</dbReference>
<dbReference type="GO" id="GO:0016887">
    <property type="term" value="F:ATP hydrolysis activity"/>
    <property type="evidence" value="ECO:0007669"/>
    <property type="project" value="RHEA"/>
</dbReference>
<dbReference type="GO" id="GO:0003723">
    <property type="term" value="F:RNA binding"/>
    <property type="evidence" value="ECO:0007669"/>
    <property type="project" value="UniProtKB-KW"/>
</dbReference>
<dbReference type="GO" id="GO:0003724">
    <property type="term" value="F:RNA helicase activity"/>
    <property type="evidence" value="ECO:0007669"/>
    <property type="project" value="UniProtKB-EC"/>
</dbReference>
<dbReference type="GO" id="GO:0000184">
    <property type="term" value="P:nuclear-transcribed mRNA catabolic process, nonsense-mediated decay"/>
    <property type="evidence" value="ECO:0007669"/>
    <property type="project" value="UniProtKB-KW"/>
</dbReference>
<dbReference type="GO" id="GO:0006364">
    <property type="term" value="P:rRNA processing"/>
    <property type="evidence" value="ECO:0007669"/>
    <property type="project" value="UniProtKB-KW"/>
</dbReference>
<dbReference type="CDD" id="cd17966">
    <property type="entry name" value="DEADc_DDX5_DDX17"/>
    <property type="match status" value="1"/>
</dbReference>
<dbReference type="CDD" id="cd18787">
    <property type="entry name" value="SF2_C_DEAD"/>
    <property type="match status" value="1"/>
</dbReference>
<dbReference type="FunFam" id="3.40.50.300:FF:000008">
    <property type="entry name" value="ATP-dependent RNA helicase RhlB"/>
    <property type="match status" value="1"/>
</dbReference>
<dbReference type="FunFam" id="3.40.50.300:FF:000079">
    <property type="entry name" value="probable ATP-dependent RNA helicase DDX17"/>
    <property type="match status" value="1"/>
</dbReference>
<dbReference type="Gene3D" id="3.40.50.300">
    <property type="entry name" value="P-loop containing nucleotide triphosphate hydrolases"/>
    <property type="match status" value="2"/>
</dbReference>
<dbReference type="InterPro" id="IPR011545">
    <property type="entry name" value="DEAD/DEAH_box_helicase_dom"/>
</dbReference>
<dbReference type="InterPro" id="IPR014001">
    <property type="entry name" value="Helicase_ATP-bd"/>
</dbReference>
<dbReference type="InterPro" id="IPR001650">
    <property type="entry name" value="Helicase_C-like"/>
</dbReference>
<dbReference type="InterPro" id="IPR027417">
    <property type="entry name" value="P-loop_NTPase"/>
</dbReference>
<dbReference type="InterPro" id="IPR000629">
    <property type="entry name" value="RNA-helicase_DEAD-box_CS"/>
</dbReference>
<dbReference type="InterPro" id="IPR014014">
    <property type="entry name" value="RNA_helicase_DEAD_Q_motif"/>
</dbReference>
<dbReference type="PANTHER" id="PTHR47958">
    <property type="entry name" value="ATP-DEPENDENT RNA HELICASE DBP3"/>
    <property type="match status" value="1"/>
</dbReference>
<dbReference type="Pfam" id="PF00270">
    <property type="entry name" value="DEAD"/>
    <property type="match status" value="1"/>
</dbReference>
<dbReference type="Pfam" id="PF00271">
    <property type="entry name" value="Helicase_C"/>
    <property type="match status" value="1"/>
</dbReference>
<dbReference type="SMART" id="SM00487">
    <property type="entry name" value="DEXDc"/>
    <property type="match status" value="1"/>
</dbReference>
<dbReference type="SMART" id="SM00490">
    <property type="entry name" value="HELICc"/>
    <property type="match status" value="1"/>
</dbReference>
<dbReference type="SUPFAM" id="SSF52540">
    <property type="entry name" value="P-loop containing nucleoside triphosphate hydrolases"/>
    <property type="match status" value="1"/>
</dbReference>
<dbReference type="PROSITE" id="PS00039">
    <property type="entry name" value="DEAD_ATP_HELICASE"/>
    <property type="match status" value="1"/>
</dbReference>
<dbReference type="PROSITE" id="PS51192">
    <property type="entry name" value="HELICASE_ATP_BIND_1"/>
    <property type="match status" value="1"/>
</dbReference>
<dbReference type="PROSITE" id="PS51194">
    <property type="entry name" value="HELICASE_CTER"/>
    <property type="match status" value="1"/>
</dbReference>
<dbReference type="PROSITE" id="PS51195">
    <property type="entry name" value="Q_MOTIF"/>
    <property type="match status" value="1"/>
</dbReference>
<accession>G0SFM2</accession>
<comment type="function">
    <text evidence="1">ATP-dependent RNA helicase involved nonsense-mediated mRNA decay and ribosome biogenesis through rRNA processing.</text>
</comment>
<comment type="catalytic activity">
    <reaction evidence="1">
        <text>ATP + H2O = ADP + phosphate + H(+)</text>
        <dbReference type="Rhea" id="RHEA:13065"/>
        <dbReference type="ChEBI" id="CHEBI:15377"/>
        <dbReference type="ChEBI" id="CHEBI:15378"/>
        <dbReference type="ChEBI" id="CHEBI:30616"/>
        <dbReference type="ChEBI" id="CHEBI:43474"/>
        <dbReference type="ChEBI" id="CHEBI:456216"/>
        <dbReference type="EC" id="3.6.4.13"/>
    </reaction>
</comment>
<comment type="subcellular location">
    <subcellularLocation>
        <location evidence="1">Cytoplasm</location>
    </subcellularLocation>
    <subcellularLocation>
        <location evidence="1">Nucleus</location>
    </subcellularLocation>
</comment>
<comment type="domain">
    <text evidence="1">The Q motif is unique to and characteristic of the DEAD box family of RNA helicases and controls ATP binding and hydrolysis.</text>
</comment>
<comment type="similarity">
    <text evidence="6">Belongs to the DEAD box helicase family. DDX5/DBP2 subfamily.</text>
</comment>
<comment type="sequence caution" evidence="6">
    <conflict type="erroneous gene model prediction">
        <sequence resource="EMBL-CDS" id="EGS17787"/>
    </conflict>
</comment>
<organism>
    <name type="scientific">Chaetomium thermophilum (strain DSM 1495 / CBS 144.50 / IMI 039719)</name>
    <name type="common">Thermochaetoides thermophila</name>
    <dbReference type="NCBI Taxonomy" id="759272"/>
    <lineage>
        <taxon>Eukaryota</taxon>
        <taxon>Fungi</taxon>
        <taxon>Dikarya</taxon>
        <taxon>Ascomycota</taxon>
        <taxon>Pezizomycotina</taxon>
        <taxon>Sordariomycetes</taxon>
        <taxon>Sordariomycetidae</taxon>
        <taxon>Sordariales</taxon>
        <taxon>Chaetomiaceae</taxon>
        <taxon>Thermochaetoides</taxon>
    </lineage>
</organism>
<reference key="1">
    <citation type="journal article" date="2011" name="Cell">
        <title>Insight into structure and assembly of the nuclear pore complex by utilizing the genome of a eukaryotic thermophile.</title>
        <authorList>
            <person name="Amlacher S."/>
            <person name="Sarges P."/>
            <person name="Flemming D."/>
            <person name="van Noort V."/>
            <person name="Kunze R."/>
            <person name="Devos D.P."/>
            <person name="Arumugam M."/>
            <person name="Bork P."/>
            <person name="Hurt E."/>
        </authorList>
    </citation>
    <scope>NUCLEOTIDE SEQUENCE [LARGE SCALE GENOMIC DNA]</scope>
    <source>
        <strain>DSM 1495 / CBS 144.50 / IMI 039719</strain>
    </source>
</reference>
<keyword id="KW-0067">ATP-binding</keyword>
<keyword id="KW-0963">Cytoplasm</keyword>
<keyword id="KW-0347">Helicase</keyword>
<keyword id="KW-0378">Hydrolase</keyword>
<keyword id="KW-0866">Nonsense-mediated mRNA decay</keyword>
<keyword id="KW-0547">Nucleotide-binding</keyword>
<keyword id="KW-0539">Nucleus</keyword>
<keyword id="KW-1185">Reference proteome</keyword>
<keyword id="KW-0690">Ribosome biogenesis</keyword>
<keyword id="KW-0694">RNA-binding</keyword>
<keyword id="KW-0698">rRNA processing</keyword>